<keyword id="KW-0325">Glycoprotein</keyword>
<keyword id="KW-0378">Hydrolase</keyword>
<keyword id="KW-0472">Membrane</keyword>
<keyword id="KW-0479">Metal-binding</keyword>
<keyword id="KW-0482">Metalloprotease</keyword>
<keyword id="KW-0645">Protease</keyword>
<keyword id="KW-1185">Reference proteome</keyword>
<keyword id="KW-0812">Transmembrane</keyword>
<keyword id="KW-1133">Transmembrane helix</keyword>
<keyword id="KW-0926">Vacuole</keyword>
<keyword id="KW-0862">Zinc</keyword>
<accession>D5GI81</accession>
<sequence>MTRVNSIIGFRPIPVTLLTVITYVSLFSALLFIDRQPPAVAKKGELDYWGVDIEEAWSDLEVLTRDFHPYNSRPNDDVRAYLLGRVQEILSRNGVSGFGNELQSSGYSGTVDLFDDGIPGKPGSNVTFVGAGSEDLTVYFEGTNIIVYIHGERPADELSPVLVSAHYDSVSTGYGATDDGAAVVSILQIIKSFTRPESQGGKRPKRGLVALLNNGEEDFLNGARAFAMHPVAKLPHSFLNLEGAGAGGRATLFRSTDAEVTKYYKRAKRPFGTIVSGDGFKAGLIRSGTDYSVFVENLGMRGLDVAFYQPRSRYHTTEDDARHSSKRSLWHMLGGSLATLRGMTDDTSKVFDSPNGSAGKGHNAVWFDLFGRAFSVLHLHTIFAFTITLIVVPFVVVLVAMWALGHFDKLYFFSNTAYIPPPPEHSIASRTTQGWRGVLRFPVAFVAASAGVVGMAFLINKINPMVVYASQYTVWTCFLSTWWIIAWVILRGADAVRPTALARGYGFLEQWLLWLVAMIGVAISIGKSHLGSGYWVLVFYSGFFTSAFISLLEMAALQKKSEVKIAVSGDDQAYPPEEHSQTGASGNISNRAANDDDDAGEHATEETPLFRGPNRPLSFAPHRNPRYDNGDHDSGDILVEEKDEAVYGGEQGWSKDLPSWTWILQFLATVPLQLVLAGSVALLLGNALAQTGADGSDMLTVLLGFGVFSIILLLPVAPFLHRITYHVTLFIFVIFVGTFIYNLAAPPFSPNARLKVYFQQTVDLQTGENNVHLVGHPDYIDRIVSKHIPSAKGKVDICQADKLKSGLRRCSWKGIAPRVVPQAPGGMPPEYGFSDWISYNVTKTGDGKATIKLRGRNTRACKLLFNKPLAKSPTLGNPIPGFPNTRELRLWSRDWERGWSVELTWEKEEDQEENKDSHSSAIVVCLWSDGNKVSDEIPALHEIRRYLPVWAIASKLADGLVEGSVPFMI</sequence>
<name>PFF1_TUBMM</name>
<organism>
    <name type="scientific">Tuber melanosporum (strain Mel28)</name>
    <name type="common">Perigord black truffle</name>
    <dbReference type="NCBI Taxonomy" id="656061"/>
    <lineage>
        <taxon>Eukaryota</taxon>
        <taxon>Fungi</taxon>
        <taxon>Dikarya</taxon>
        <taxon>Ascomycota</taxon>
        <taxon>Pezizomycotina</taxon>
        <taxon>Pezizomycetes</taxon>
        <taxon>Pezizales</taxon>
        <taxon>Tuberaceae</taxon>
        <taxon>Tuber</taxon>
    </lineage>
</organism>
<comment type="function">
    <text evidence="1">May be involved in vacuolar sorting and osmoregulation.</text>
</comment>
<comment type="cofactor">
    <cofactor evidence="2">
        <name>Zn(2+)</name>
        <dbReference type="ChEBI" id="CHEBI:29105"/>
    </cofactor>
    <text evidence="2">Binds 2 Zn(2+) ions per subunit.</text>
</comment>
<comment type="subcellular location">
    <subcellularLocation>
        <location evidence="1">Vacuole membrane</location>
        <topology evidence="3">Multi-pass membrane protein</topology>
    </subcellularLocation>
</comment>
<comment type="similarity">
    <text evidence="6">Belongs to the peptidase M28 family.</text>
</comment>
<feature type="chain" id="PRO_0000411746" description="Vacuolar membrane protease">
    <location>
        <begin position="1"/>
        <end position="969"/>
    </location>
</feature>
<feature type="topological domain" description="Cytoplasmic" evidence="1">
    <location>
        <begin position="1"/>
        <end position="12"/>
    </location>
</feature>
<feature type="transmembrane region" description="Helical; Name=1" evidence="3">
    <location>
        <begin position="13"/>
        <end position="33"/>
    </location>
</feature>
<feature type="topological domain" description="Vacuolar" evidence="1">
    <location>
        <begin position="34"/>
        <end position="381"/>
    </location>
</feature>
<feature type="transmembrane region" description="Helical; Name=2" evidence="3">
    <location>
        <begin position="382"/>
        <end position="402"/>
    </location>
</feature>
<feature type="topological domain" description="Cytoplasmic" evidence="1">
    <location>
        <begin position="403"/>
        <end position="438"/>
    </location>
</feature>
<feature type="transmembrane region" description="Helical; Name=3" evidence="3">
    <location>
        <begin position="439"/>
        <end position="459"/>
    </location>
</feature>
<feature type="topological domain" description="Vacuolar" evidence="1">
    <location>
        <begin position="460"/>
        <end position="469"/>
    </location>
</feature>
<feature type="transmembrane region" description="Helical; Name=4" evidence="3">
    <location>
        <begin position="470"/>
        <end position="490"/>
    </location>
</feature>
<feature type="topological domain" description="Cytoplasmic" evidence="1">
    <location>
        <begin position="491"/>
        <end position="505"/>
    </location>
</feature>
<feature type="transmembrane region" description="Helical; Name=5" evidence="3">
    <location>
        <begin position="506"/>
        <end position="526"/>
    </location>
</feature>
<feature type="topological domain" description="Vacuolar" evidence="1">
    <location>
        <begin position="527"/>
        <end position="531"/>
    </location>
</feature>
<feature type="transmembrane region" description="Helical; Name=6" evidence="3">
    <location>
        <begin position="532"/>
        <end position="552"/>
    </location>
</feature>
<feature type="topological domain" description="Cytoplasmic" evidence="1">
    <location>
        <begin position="553"/>
        <end position="662"/>
    </location>
</feature>
<feature type="transmembrane region" description="Helical; Name=7" evidence="3">
    <location>
        <begin position="663"/>
        <end position="683"/>
    </location>
</feature>
<feature type="topological domain" description="Vacuolar" evidence="1">
    <location>
        <begin position="684"/>
        <end position="698"/>
    </location>
</feature>
<feature type="transmembrane region" description="Helical; Name=8" evidence="3">
    <location>
        <begin position="699"/>
        <end position="719"/>
    </location>
</feature>
<feature type="topological domain" description="Cytoplasmic" evidence="1">
    <location>
        <begin position="720"/>
        <end position="727"/>
    </location>
</feature>
<feature type="transmembrane region" description="Helical; Name=9" evidence="3">
    <location>
        <begin position="728"/>
        <end position="748"/>
    </location>
</feature>
<feature type="topological domain" description="Vacuolar" evidence="1">
    <location>
        <begin position="749"/>
        <end position="969"/>
    </location>
</feature>
<feature type="region of interest" description="Disordered" evidence="5">
    <location>
        <begin position="571"/>
        <end position="629"/>
    </location>
</feature>
<feature type="compositionally biased region" description="Polar residues" evidence="5">
    <location>
        <begin position="581"/>
        <end position="592"/>
    </location>
</feature>
<feature type="active site" description="Proton acceptor" evidence="2">
    <location>
        <position position="216"/>
    </location>
</feature>
<feature type="binding site" evidence="2">
    <location>
        <position position="166"/>
    </location>
    <ligand>
        <name>Zn(2+)</name>
        <dbReference type="ChEBI" id="CHEBI:29105"/>
        <label>1</label>
        <note>catalytic</note>
    </ligand>
</feature>
<feature type="binding site" evidence="2">
    <location>
        <position position="178"/>
    </location>
    <ligand>
        <name>Zn(2+)</name>
        <dbReference type="ChEBI" id="CHEBI:29105"/>
        <label>1</label>
        <note>catalytic</note>
    </ligand>
</feature>
<feature type="binding site" evidence="2">
    <location>
        <position position="178"/>
    </location>
    <ligand>
        <name>Zn(2+)</name>
        <dbReference type="ChEBI" id="CHEBI:29105"/>
        <label>2</label>
        <note>catalytic</note>
    </ligand>
</feature>
<feature type="binding site" evidence="2">
    <location>
        <position position="217"/>
    </location>
    <ligand>
        <name>Zn(2+)</name>
        <dbReference type="ChEBI" id="CHEBI:29105"/>
        <label>2</label>
        <note>catalytic</note>
    </ligand>
</feature>
<feature type="binding site" evidence="2">
    <location>
        <position position="242"/>
    </location>
    <ligand>
        <name>Zn(2+)</name>
        <dbReference type="ChEBI" id="CHEBI:29105"/>
        <label>1</label>
        <note>catalytic</note>
    </ligand>
</feature>
<feature type="binding site" evidence="2">
    <location>
        <position position="315"/>
    </location>
    <ligand>
        <name>Zn(2+)</name>
        <dbReference type="ChEBI" id="CHEBI:29105"/>
        <label>2</label>
        <note>catalytic</note>
    </ligand>
</feature>
<feature type="site" description="Transition state stabilizer" evidence="2">
    <location>
        <position position="314"/>
    </location>
</feature>
<feature type="glycosylation site" description="N-linked (GlcNAc...) asparagine" evidence="4">
    <location>
        <position position="125"/>
    </location>
</feature>
<feature type="glycosylation site" description="N-linked (GlcNAc...) asparagine" evidence="4">
    <location>
        <position position="355"/>
    </location>
</feature>
<feature type="glycosylation site" description="N-linked (GlcNAc...) asparagine" evidence="4">
    <location>
        <position position="840"/>
    </location>
</feature>
<evidence type="ECO:0000250" key="1">
    <source>
        <dbReference type="UniProtKB" id="P38244"/>
    </source>
</evidence>
<evidence type="ECO:0000250" key="2">
    <source>
        <dbReference type="UniProtKB" id="P80561"/>
    </source>
</evidence>
<evidence type="ECO:0000255" key="3"/>
<evidence type="ECO:0000255" key="4">
    <source>
        <dbReference type="PROSITE-ProRule" id="PRU00498"/>
    </source>
</evidence>
<evidence type="ECO:0000256" key="5">
    <source>
        <dbReference type="SAM" id="MobiDB-lite"/>
    </source>
</evidence>
<evidence type="ECO:0000305" key="6"/>
<protein>
    <recommendedName>
        <fullName evidence="1">Vacuolar membrane protease</fullName>
        <ecNumber evidence="6">3.4.-.-</ecNumber>
    </recommendedName>
    <alternativeName>
        <fullName evidence="1">FXNA-related family protease 1</fullName>
    </alternativeName>
</protein>
<dbReference type="EC" id="3.4.-.-" evidence="6"/>
<dbReference type="EMBL" id="FN430324">
    <property type="protein sequence ID" value="CAZ84224.1"/>
    <property type="molecule type" value="Genomic_DNA"/>
</dbReference>
<dbReference type="RefSeq" id="XP_002840033.1">
    <property type="nucleotide sequence ID" value="XM_002839987.1"/>
</dbReference>
<dbReference type="SMR" id="D5GI81"/>
<dbReference type="FunCoup" id="D5GI81">
    <property type="interactions" value="5"/>
</dbReference>
<dbReference type="STRING" id="656061.D5GI81"/>
<dbReference type="EnsemblFungi" id="CAZ84224">
    <property type="protein sequence ID" value="CAZ84224"/>
    <property type="gene ID" value="GSTUM_00008325001"/>
</dbReference>
<dbReference type="GeneID" id="9181942"/>
<dbReference type="KEGG" id="tml:GSTUM_00008325001"/>
<dbReference type="eggNOG" id="KOG2194">
    <property type="taxonomic scope" value="Eukaryota"/>
</dbReference>
<dbReference type="HOGENOM" id="CLU_006412_1_0_1"/>
<dbReference type="InParanoid" id="D5GI81"/>
<dbReference type="OMA" id="TPWPVTI"/>
<dbReference type="Proteomes" id="UP000006911">
    <property type="component" value="Unassembled WGS sequence"/>
</dbReference>
<dbReference type="GO" id="GO:0005774">
    <property type="term" value="C:vacuolar membrane"/>
    <property type="evidence" value="ECO:0007669"/>
    <property type="project" value="UniProtKB-SubCell"/>
</dbReference>
<dbReference type="GO" id="GO:0046872">
    <property type="term" value="F:metal ion binding"/>
    <property type="evidence" value="ECO:0007669"/>
    <property type="project" value="UniProtKB-KW"/>
</dbReference>
<dbReference type="GO" id="GO:0008235">
    <property type="term" value="F:metalloexopeptidase activity"/>
    <property type="evidence" value="ECO:0007669"/>
    <property type="project" value="InterPro"/>
</dbReference>
<dbReference type="GO" id="GO:0006508">
    <property type="term" value="P:proteolysis"/>
    <property type="evidence" value="ECO:0007669"/>
    <property type="project" value="UniProtKB-KW"/>
</dbReference>
<dbReference type="CDD" id="cd03875">
    <property type="entry name" value="M28_Fxna_like"/>
    <property type="match status" value="1"/>
</dbReference>
<dbReference type="FunFam" id="3.40.630.10:FF:000057">
    <property type="entry name" value="Vacuolar membrane protease"/>
    <property type="match status" value="1"/>
</dbReference>
<dbReference type="Gene3D" id="3.40.630.10">
    <property type="entry name" value="Zn peptidases"/>
    <property type="match status" value="1"/>
</dbReference>
<dbReference type="InterPro" id="IPR048024">
    <property type="entry name" value="Fxna-like_M28_dom"/>
</dbReference>
<dbReference type="InterPro" id="IPR045175">
    <property type="entry name" value="M28_fam"/>
</dbReference>
<dbReference type="InterPro" id="IPR007484">
    <property type="entry name" value="Peptidase_M28"/>
</dbReference>
<dbReference type="InterPro" id="IPR053975">
    <property type="entry name" value="PFF1_C"/>
</dbReference>
<dbReference type="InterPro" id="IPR053976">
    <property type="entry name" value="PFF1_TM"/>
</dbReference>
<dbReference type="PANTHER" id="PTHR12147">
    <property type="entry name" value="METALLOPEPTIDASE M28 FAMILY MEMBER"/>
    <property type="match status" value="1"/>
</dbReference>
<dbReference type="PANTHER" id="PTHR12147:SF58">
    <property type="entry name" value="VACUOLAR MEMBRANE PROTEASE"/>
    <property type="match status" value="1"/>
</dbReference>
<dbReference type="Pfam" id="PF04389">
    <property type="entry name" value="Peptidase_M28"/>
    <property type="match status" value="1"/>
</dbReference>
<dbReference type="Pfam" id="PF22250">
    <property type="entry name" value="PFF1_C"/>
    <property type="match status" value="2"/>
</dbReference>
<dbReference type="Pfam" id="PF22251">
    <property type="entry name" value="PFF1_TM"/>
    <property type="match status" value="1"/>
</dbReference>
<dbReference type="SUPFAM" id="SSF53187">
    <property type="entry name" value="Zn-dependent exopeptidases"/>
    <property type="match status" value="1"/>
</dbReference>
<gene>
    <name type="ORF">GSTUM_00008325001</name>
</gene>
<reference key="1">
    <citation type="journal article" date="2010" name="Nature">
        <title>Perigord black truffle genome uncovers evolutionary origins and mechanisms of symbiosis.</title>
        <authorList>
            <person name="Martin F."/>
            <person name="Kohler A."/>
            <person name="Murat C."/>
            <person name="Balestrini R."/>
            <person name="Coutinho P.M."/>
            <person name="Jaillon O."/>
            <person name="Montanini B."/>
            <person name="Morin E."/>
            <person name="Noel B."/>
            <person name="Percudani R."/>
            <person name="Porcel B."/>
            <person name="Rubini A."/>
            <person name="Amicucci A."/>
            <person name="Amselem J."/>
            <person name="Anthouard V."/>
            <person name="Arcioni S."/>
            <person name="Artiguenave F."/>
            <person name="Aury J.M."/>
            <person name="Ballario P."/>
            <person name="Bolchi A."/>
            <person name="Brenna A."/>
            <person name="Brun A."/>
            <person name="Buee M."/>
            <person name="Cantarel B."/>
            <person name="Chevalier G."/>
            <person name="Couloux A."/>
            <person name="Da Silva C."/>
            <person name="Denoeud F."/>
            <person name="Duplessis S."/>
            <person name="Ghignone S."/>
            <person name="Hilselberger B."/>
            <person name="Iotti M."/>
            <person name="Marcais B."/>
            <person name="Mello A."/>
            <person name="Miranda M."/>
            <person name="Pacioni G."/>
            <person name="Quesneville H."/>
            <person name="Riccioni C."/>
            <person name="Ruotolo R."/>
            <person name="Splivallo R."/>
            <person name="Stocchi V."/>
            <person name="Tisserant E."/>
            <person name="Viscomi A.R."/>
            <person name="Zambonelli A."/>
            <person name="Zampieri E."/>
            <person name="Henrissat B."/>
            <person name="Lebrun M.H."/>
            <person name="Paolocci F."/>
            <person name="Bonfante P."/>
            <person name="Ottonello S."/>
            <person name="Wincker P."/>
        </authorList>
    </citation>
    <scope>NUCLEOTIDE SEQUENCE [LARGE SCALE GENOMIC DNA]</scope>
    <source>
        <strain>Mel28</strain>
    </source>
</reference>
<proteinExistence type="inferred from homology"/>